<feature type="chain" id="PRO_0000364480" description="Fructose-1,6-bisphosphatase class 1">
    <location>
        <begin position="1"/>
        <end position="340"/>
    </location>
</feature>
<feature type="binding site" evidence="1">
    <location>
        <position position="107"/>
    </location>
    <ligand>
        <name>Mg(2+)</name>
        <dbReference type="ChEBI" id="CHEBI:18420"/>
        <label>1</label>
    </ligand>
</feature>
<feature type="binding site" evidence="1">
    <location>
        <position position="126"/>
    </location>
    <ligand>
        <name>Mg(2+)</name>
        <dbReference type="ChEBI" id="CHEBI:18420"/>
        <label>1</label>
    </ligand>
</feature>
<feature type="binding site" evidence="1">
    <location>
        <position position="126"/>
    </location>
    <ligand>
        <name>Mg(2+)</name>
        <dbReference type="ChEBI" id="CHEBI:18420"/>
        <label>2</label>
    </ligand>
</feature>
<feature type="binding site" evidence="1">
    <location>
        <position position="128"/>
    </location>
    <ligand>
        <name>Mg(2+)</name>
        <dbReference type="ChEBI" id="CHEBI:18420"/>
        <label>1</label>
    </ligand>
</feature>
<feature type="binding site" evidence="1">
    <location>
        <position position="129"/>
    </location>
    <ligand>
        <name>Mg(2+)</name>
        <dbReference type="ChEBI" id="CHEBI:18420"/>
        <label>2</label>
    </ligand>
</feature>
<feature type="binding site" evidence="1">
    <location>
        <position position="215"/>
    </location>
    <ligand>
        <name>substrate</name>
    </ligand>
</feature>
<feature type="binding site" evidence="1">
    <location>
        <position position="287"/>
    </location>
    <ligand>
        <name>Mg(2+)</name>
        <dbReference type="ChEBI" id="CHEBI:18420"/>
        <label>2</label>
    </ligand>
</feature>
<sequence>MTLVGNFSPLVLVGDSDRVEAETVGAYLDGWAGHDKVRLATANAIKAILSGAGRLVGRIARGYLPGDPGKLVGVNSDQDQQKSIDVGSHNLFVELLIAAGVASILSEEADLPVAGKADGLVAVAIDPLDGSGNVGLGAPLGTIFSIFPADVEEPFLQPGNRQIAAGYVSYGNSVDLGFSVGEGVIFATLDPVSGQFHITRRNVKLPERTSDLAFNASVQRHLSAGMQAYVNDAFLGKDGPRGRNFNMRWLGAAVGDMHRIMQRGGLFFYVNDSRPGYEKGRLRLVYEANPIAFLAREAGGKATDGSRPILDIVPQTYHERSALVFGVAEEVDILGEYFVK</sequence>
<reference key="1">
    <citation type="journal article" date="2002" name="Proc. Natl. Acad. Sci. U.S.A.">
        <title>The genome sequence of the facultative intracellular pathogen Brucella melitensis.</title>
        <authorList>
            <person name="DelVecchio V.G."/>
            <person name="Kapatral V."/>
            <person name="Redkar R.J."/>
            <person name="Patra G."/>
            <person name="Mujer C."/>
            <person name="Los T."/>
            <person name="Ivanova N."/>
            <person name="Anderson I."/>
            <person name="Bhattacharyya A."/>
            <person name="Lykidis A."/>
            <person name="Reznik G."/>
            <person name="Jablonski L."/>
            <person name="Larsen N."/>
            <person name="D'Souza M."/>
            <person name="Bernal A."/>
            <person name="Mazur M."/>
            <person name="Goltsman E."/>
            <person name="Selkov E."/>
            <person name="Elzer P.H."/>
            <person name="Hagius S."/>
            <person name="O'Callaghan D."/>
            <person name="Letesson J.-J."/>
            <person name="Haselkorn R."/>
            <person name="Kyrpides N.C."/>
            <person name="Overbeek R."/>
        </authorList>
    </citation>
    <scope>NUCLEOTIDE SEQUENCE [LARGE SCALE GENOMIC DNA]</scope>
    <source>
        <strain>ATCC 23456 / CCUG 17765 / NCTC 10094 / 16M</strain>
    </source>
</reference>
<evidence type="ECO:0000255" key="1">
    <source>
        <dbReference type="HAMAP-Rule" id="MF_01855"/>
    </source>
</evidence>
<gene>
    <name evidence="1" type="primary">fbp</name>
    <name type="ordered locus">BMEII0422</name>
</gene>
<keyword id="KW-0119">Carbohydrate metabolism</keyword>
<keyword id="KW-0963">Cytoplasm</keyword>
<keyword id="KW-0378">Hydrolase</keyword>
<keyword id="KW-0460">Magnesium</keyword>
<keyword id="KW-0479">Metal-binding</keyword>
<proteinExistence type="inferred from homology"/>
<name>F16PA_BRUME</name>
<protein>
    <recommendedName>
        <fullName evidence="1">Fructose-1,6-bisphosphatase class 1</fullName>
        <shortName evidence="1">FBPase class 1</shortName>
        <ecNumber evidence="1">3.1.3.11</ecNumber>
    </recommendedName>
    <alternativeName>
        <fullName evidence="1">D-fructose-1,6-bisphosphate 1-phosphohydrolase class 1</fullName>
    </alternativeName>
</protein>
<accession>Q8YCV6</accession>
<organism>
    <name type="scientific">Brucella melitensis biotype 1 (strain ATCC 23456 / CCUG 17765 / NCTC 10094 / 16M)</name>
    <dbReference type="NCBI Taxonomy" id="224914"/>
    <lineage>
        <taxon>Bacteria</taxon>
        <taxon>Pseudomonadati</taxon>
        <taxon>Pseudomonadota</taxon>
        <taxon>Alphaproteobacteria</taxon>
        <taxon>Hyphomicrobiales</taxon>
        <taxon>Brucellaceae</taxon>
        <taxon>Brucella/Ochrobactrum group</taxon>
        <taxon>Brucella</taxon>
    </lineage>
</organism>
<dbReference type="EC" id="3.1.3.11" evidence="1"/>
<dbReference type="EMBL" id="AE008918">
    <property type="protein sequence ID" value="AAL53664.1"/>
    <property type="molecule type" value="Genomic_DNA"/>
</dbReference>
<dbReference type="PIR" id="AE3562">
    <property type="entry name" value="AE3562"/>
</dbReference>
<dbReference type="RefSeq" id="WP_002965774.1">
    <property type="nucleotide sequence ID" value="NZ_GG703779.1"/>
</dbReference>
<dbReference type="SMR" id="Q8YCV6"/>
<dbReference type="KEGG" id="bme:BMEII0422"/>
<dbReference type="KEGG" id="bmel:DK63_2817"/>
<dbReference type="PATRIC" id="fig|224914.52.peg.2953"/>
<dbReference type="eggNOG" id="COG0158">
    <property type="taxonomic scope" value="Bacteria"/>
</dbReference>
<dbReference type="PhylomeDB" id="Q8YCV6"/>
<dbReference type="UniPathway" id="UPA00138"/>
<dbReference type="Proteomes" id="UP000000419">
    <property type="component" value="Chromosome II"/>
</dbReference>
<dbReference type="GO" id="GO:0005829">
    <property type="term" value="C:cytosol"/>
    <property type="evidence" value="ECO:0007669"/>
    <property type="project" value="TreeGrafter"/>
</dbReference>
<dbReference type="GO" id="GO:0042132">
    <property type="term" value="F:fructose 1,6-bisphosphate 1-phosphatase activity"/>
    <property type="evidence" value="ECO:0007669"/>
    <property type="project" value="UniProtKB-UniRule"/>
</dbReference>
<dbReference type="GO" id="GO:0000287">
    <property type="term" value="F:magnesium ion binding"/>
    <property type="evidence" value="ECO:0007669"/>
    <property type="project" value="UniProtKB-UniRule"/>
</dbReference>
<dbReference type="GO" id="GO:0030388">
    <property type="term" value="P:fructose 1,6-bisphosphate metabolic process"/>
    <property type="evidence" value="ECO:0007669"/>
    <property type="project" value="TreeGrafter"/>
</dbReference>
<dbReference type="GO" id="GO:0006002">
    <property type="term" value="P:fructose 6-phosphate metabolic process"/>
    <property type="evidence" value="ECO:0007669"/>
    <property type="project" value="TreeGrafter"/>
</dbReference>
<dbReference type="GO" id="GO:0006000">
    <property type="term" value="P:fructose metabolic process"/>
    <property type="evidence" value="ECO:0007669"/>
    <property type="project" value="TreeGrafter"/>
</dbReference>
<dbReference type="GO" id="GO:0006094">
    <property type="term" value="P:gluconeogenesis"/>
    <property type="evidence" value="ECO:0007669"/>
    <property type="project" value="UniProtKB-UniRule"/>
</dbReference>
<dbReference type="GO" id="GO:0005986">
    <property type="term" value="P:sucrose biosynthetic process"/>
    <property type="evidence" value="ECO:0007669"/>
    <property type="project" value="TreeGrafter"/>
</dbReference>
<dbReference type="CDD" id="cd00354">
    <property type="entry name" value="FBPase"/>
    <property type="match status" value="1"/>
</dbReference>
<dbReference type="Gene3D" id="3.40.190.80">
    <property type="match status" value="1"/>
</dbReference>
<dbReference type="Gene3D" id="3.30.540.10">
    <property type="entry name" value="Fructose-1,6-Bisphosphatase, subunit A, domain 1"/>
    <property type="match status" value="1"/>
</dbReference>
<dbReference type="HAMAP" id="MF_01855">
    <property type="entry name" value="FBPase_class1"/>
    <property type="match status" value="1"/>
</dbReference>
<dbReference type="InterPro" id="IPR044015">
    <property type="entry name" value="FBPase_C_dom"/>
</dbReference>
<dbReference type="InterPro" id="IPR000146">
    <property type="entry name" value="FBPase_class-1"/>
</dbReference>
<dbReference type="InterPro" id="IPR033391">
    <property type="entry name" value="FBPase_N"/>
</dbReference>
<dbReference type="InterPro" id="IPR028343">
    <property type="entry name" value="FBPtase"/>
</dbReference>
<dbReference type="InterPro" id="IPR020548">
    <property type="entry name" value="Fructose_bisphosphatase_AS"/>
</dbReference>
<dbReference type="NCBIfam" id="NF006780">
    <property type="entry name" value="PRK09293.1-4"/>
    <property type="match status" value="1"/>
</dbReference>
<dbReference type="PANTHER" id="PTHR11556">
    <property type="entry name" value="FRUCTOSE-1,6-BISPHOSPHATASE-RELATED"/>
    <property type="match status" value="1"/>
</dbReference>
<dbReference type="PANTHER" id="PTHR11556:SF35">
    <property type="entry name" value="SEDOHEPTULOSE-1,7-BISPHOSPHATASE, CHLOROPLASTIC"/>
    <property type="match status" value="1"/>
</dbReference>
<dbReference type="Pfam" id="PF00316">
    <property type="entry name" value="FBPase"/>
    <property type="match status" value="1"/>
</dbReference>
<dbReference type="Pfam" id="PF18913">
    <property type="entry name" value="FBPase_C"/>
    <property type="match status" value="1"/>
</dbReference>
<dbReference type="PIRSF" id="PIRSF500210">
    <property type="entry name" value="FBPtase"/>
    <property type="match status" value="1"/>
</dbReference>
<dbReference type="PIRSF" id="PIRSF000904">
    <property type="entry name" value="FBPtase_SBPase"/>
    <property type="match status" value="1"/>
</dbReference>
<dbReference type="PRINTS" id="PR00115">
    <property type="entry name" value="F16BPHPHTASE"/>
</dbReference>
<dbReference type="SUPFAM" id="SSF56655">
    <property type="entry name" value="Carbohydrate phosphatase"/>
    <property type="match status" value="1"/>
</dbReference>
<dbReference type="PROSITE" id="PS00124">
    <property type="entry name" value="FBPASE"/>
    <property type="match status" value="1"/>
</dbReference>
<comment type="catalytic activity">
    <reaction evidence="1">
        <text>beta-D-fructose 1,6-bisphosphate + H2O = beta-D-fructose 6-phosphate + phosphate</text>
        <dbReference type="Rhea" id="RHEA:11064"/>
        <dbReference type="ChEBI" id="CHEBI:15377"/>
        <dbReference type="ChEBI" id="CHEBI:32966"/>
        <dbReference type="ChEBI" id="CHEBI:43474"/>
        <dbReference type="ChEBI" id="CHEBI:57634"/>
        <dbReference type="EC" id="3.1.3.11"/>
    </reaction>
</comment>
<comment type="cofactor">
    <cofactor evidence="1">
        <name>Mg(2+)</name>
        <dbReference type="ChEBI" id="CHEBI:18420"/>
    </cofactor>
    <text evidence="1">Binds 2 magnesium ions per subunit.</text>
</comment>
<comment type="pathway">
    <text evidence="1">Carbohydrate biosynthesis; gluconeogenesis.</text>
</comment>
<comment type="subunit">
    <text evidence="1">Homotetramer.</text>
</comment>
<comment type="subcellular location">
    <subcellularLocation>
        <location evidence="1">Cytoplasm</location>
    </subcellularLocation>
</comment>
<comment type="similarity">
    <text evidence="1">Belongs to the FBPase class 1 family.</text>
</comment>